<dbReference type="EC" id="1.15.1.1"/>
<dbReference type="EMBL" id="U47870">
    <property type="protein sequence ID" value="AAB50297.1"/>
    <property type="molecule type" value="Genomic_DNA"/>
</dbReference>
<dbReference type="EMBL" id="AY754566">
    <property type="protein sequence ID" value="AAX13141.1"/>
    <property type="molecule type" value="Genomic_DNA"/>
</dbReference>
<dbReference type="SMR" id="Q95079"/>
<dbReference type="GO" id="GO:0005737">
    <property type="term" value="C:cytoplasm"/>
    <property type="evidence" value="ECO:0007669"/>
    <property type="project" value="UniProtKB-SubCell"/>
</dbReference>
<dbReference type="GO" id="GO:0005507">
    <property type="term" value="F:copper ion binding"/>
    <property type="evidence" value="ECO:0007669"/>
    <property type="project" value="InterPro"/>
</dbReference>
<dbReference type="GO" id="GO:0004784">
    <property type="term" value="F:superoxide dismutase activity"/>
    <property type="evidence" value="ECO:0007669"/>
    <property type="project" value="UniProtKB-EC"/>
</dbReference>
<dbReference type="CDD" id="cd00305">
    <property type="entry name" value="Cu-Zn_Superoxide_Dismutase"/>
    <property type="match status" value="1"/>
</dbReference>
<dbReference type="Gene3D" id="2.60.40.200">
    <property type="entry name" value="Superoxide dismutase, copper/zinc binding domain"/>
    <property type="match status" value="1"/>
</dbReference>
<dbReference type="InterPro" id="IPR036423">
    <property type="entry name" value="SOD-like_Cu/Zn_dom_sf"/>
</dbReference>
<dbReference type="InterPro" id="IPR024134">
    <property type="entry name" value="SOD_Cu/Zn_/chaperone"/>
</dbReference>
<dbReference type="InterPro" id="IPR018152">
    <property type="entry name" value="SOD_Cu/Zn_BS"/>
</dbReference>
<dbReference type="InterPro" id="IPR001424">
    <property type="entry name" value="SOD_Cu_Zn_dom"/>
</dbReference>
<dbReference type="PANTHER" id="PTHR10003">
    <property type="entry name" value="SUPEROXIDE DISMUTASE CU-ZN -RELATED"/>
    <property type="match status" value="1"/>
</dbReference>
<dbReference type="Pfam" id="PF00080">
    <property type="entry name" value="Sod_Cu"/>
    <property type="match status" value="1"/>
</dbReference>
<dbReference type="PRINTS" id="PR00068">
    <property type="entry name" value="CUZNDISMTASE"/>
</dbReference>
<dbReference type="SUPFAM" id="SSF49329">
    <property type="entry name" value="Cu,Zn superoxide dismutase-like"/>
    <property type="match status" value="1"/>
</dbReference>
<dbReference type="PROSITE" id="PS00087">
    <property type="entry name" value="SOD_CU_ZN_1"/>
    <property type="match status" value="1"/>
</dbReference>
<reference key="1">
    <citation type="journal article" date="1997" name="Mol. Phylogenet. Evol.">
        <title>Evolution of the Drosophila obscura species group inferred from the Gpdh and Sod genes.</title>
        <authorList>
            <person name="Barrio E."/>
            <person name="Ayala F.J."/>
        </authorList>
    </citation>
    <scope>NUCLEOTIDE SEQUENCE [GENOMIC DNA]</scope>
    <source>
        <strain>NDSSC 14011-0101.1</strain>
    </source>
</reference>
<reference key="2">
    <citation type="journal article" date="2005" name="Genetics">
        <title>Patterns of selection on synonymous and nonsynonymous variants in Drosophila miranda.</title>
        <authorList>
            <person name="Bartolome C."/>
            <person name="Maside X."/>
            <person name="Yi S."/>
            <person name="Grant A.L."/>
            <person name="Charlesworth B."/>
        </authorList>
    </citation>
    <scope>NUCLEOTIDE SEQUENCE [GENOMIC DNA]</scope>
    <source>
        <strain>MSH22</strain>
    </source>
</reference>
<feature type="chain" id="PRO_0000164088" description="Superoxide dismutase [Cu-Zn]">
    <location>
        <begin position="1" status="less than"/>
        <end position="114" status="greater than"/>
    </location>
</feature>
<feature type="region of interest" description="Disordered" evidence="3">
    <location>
        <begin position="48"/>
        <end position="68"/>
    </location>
</feature>
<feature type="compositionally biased region" description="Basic and acidic residues" evidence="3">
    <location>
        <begin position="58"/>
        <end position="68"/>
    </location>
</feature>
<feature type="binding site" evidence="1">
    <location>
        <position position="37"/>
    </location>
    <ligand>
        <name>Cu cation</name>
        <dbReference type="ChEBI" id="CHEBI:23378"/>
        <note>catalytic</note>
    </ligand>
</feature>
<feature type="binding site" evidence="1">
    <location>
        <position position="39"/>
    </location>
    <ligand>
        <name>Cu cation</name>
        <dbReference type="ChEBI" id="CHEBI:23378"/>
        <note>catalytic</note>
    </ligand>
</feature>
<feature type="binding site" evidence="1">
    <location>
        <position position="54"/>
    </location>
    <ligand>
        <name>Cu cation</name>
        <dbReference type="ChEBI" id="CHEBI:23378"/>
        <note>catalytic</note>
    </ligand>
</feature>
<feature type="binding site" evidence="1">
    <location>
        <position position="54"/>
    </location>
    <ligand>
        <name>Zn(2+)</name>
        <dbReference type="ChEBI" id="CHEBI:29105"/>
        <note>structural</note>
    </ligand>
</feature>
<feature type="binding site" evidence="1">
    <location>
        <position position="62"/>
    </location>
    <ligand>
        <name>Zn(2+)</name>
        <dbReference type="ChEBI" id="CHEBI:29105"/>
        <note>structural</note>
    </ligand>
</feature>
<feature type="binding site" evidence="1">
    <location>
        <position position="71"/>
    </location>
    <ligand>
        <name>Zn(2+)</name>
        <dbReference type="ChEBI" id="CHEBI:29105"/>
        <note>structural</note>
    </ligand>
</feature>
<feature type="binding site" evidence="1">
    <location>
        <position position="74"/>
    </location>
    <ligand>
        <name>Zn(2+)</name>
        <dbReference type="ChEBI" id="CHEBI:29105"/>
        <note>structural</note>
    </ligand>
</feature>
<feature type="binding site" evidence="1">
    <location>
        <position position="111"/>
    </location>
    <ligand>
        <name>Cu cation</name>
        <dbReference type="ChEBI" id="CHEBI:23378"/>
        <note>catalytic</note>
    </ligand>
</feature>
<feature type="non-terminal residue">
    <location>
        <position position="1"/>
    </location>
</feature>
<feature type="non-terminal residue">
    <location>
        <position position="114"/>
    </location>
</feature>
<organism>
    <name type="scientific">Drosophila miranda</name>
    <name type="common">Fruit fly</name>
    <dbReference type="NCBI Taxonomy" id="7229"/>
    <lineage>
        <taxon>Eukaryota</taxon>
        <taxon>Metazoa</taxon>
        <taxon>Ecdysozoa</taxon>
        <taxon>Arthropoda</taxon>
        <taxon>Hexapoda</taxon>
        <taxon>Insecta</taxon>
        <taxon>Pterygota</taxon>
        <taxon>Neoptera</taxon>
        <taxon>Endopterygota</taxon>
        <taxon>Diptera</taxon>
        <taxon>Brachycera</taxon>
        <taxon>Muscomorpha</taxon>
        <taxon>Ephydroidea</taxon>
        <taxon>Drosophilidae</taxon>
        <taxon>Drosophila</taxon>
        <taxon>Sophophora</taxon>
    </lineage>
</organism>
<proteinExistence type="inferred from homology"/>
<evidence type="ECO:0000250" key="1"/>
<evidence type="ECO:0000250" key="2">
    <source>
        <dbReference type="UniProtKB" id="P61851"/>
    </source>
</evidence>
<evidence type="ECO:0000256" key="3">
    <source>
        <dbReference type="SAM" id="MobiDB-lite"/>
    </source>
</evidence>
<evidence type="ECO:0000305" key="4"/>
<keyword id="KW-0049">Antioxidant</keyword>
<keyword id="KW-0186">Copper</keyword>
<keyword id="KW-0963">Cytoplasm</keyword>
<keyword id="KW-0479">Metal-binding</keyword>
<keyword id="KW-0560">Oxidoreductase</keyword>
<keyword id="KW-0862">Zinc</keyword>
<sequence length="114" mass="11864">INGDAKGTVFFEQETSEAPVKVTGEGLGLAKGLHGFHVHEFGDNTNGCMSSGPHFNPRNKEHGAPTDENRHLGDLGNIQAAGDSPTAVSITDSKITLFGADSIIGRTVVVHADA</sequence>
<comment type="function">
    <text>Destroys radicals which are normally produced within the cells and which are toxic to biological systems.</text>
</comment>
<comment type="catalytic activity">
    <reaction>
        <text>2 superoxide + 2 H(+) = H2O2 + O2</text>
        <dbReference type="Rhea" id="RHEA:20696"/>
        <dbReference type="ChEBI" id="CHEBI:15378"/>
        <dbReference type="ChEBI" id="CHEBI:15379"/>
        <dbReference type="ChEBI" id="CHEBI:16240"/>
        <dbReference type="ChEBI" id="CHEBI:18421"/>
        <dbReference type="EC" id="1.15.1.1"/>
    </reaction>
</comment>
<comment type="cofactor">
    <cofactor evidence="1">
        <name>Cu cation</name>
        <dbReference type="ChEBI" id="CHEBI:23378"/>
    </cofactor>
    <text evidence="1">Binds 1 copper ion per subunit.</text>
</comment>
<comment type="cofactor">
    <cofactor evidence="1">
        <name>Zn(2+)</name>
        <dbReference type="ChEBI" id="CHEBI:29105"/>
    </cofactor>
    <text evidence="1">Binds 1 zinc ion per subunit.</text>
</comment>
<comment type="subunit">
    <text evidence="1">Homodimer.</text>
</comment>
<comment type="subcellular location">
    <subcellularLocation>
        <location>Cytoplasm</location>
    </subcellularLocation>
</comment>
<comment type="similarity">
    <text evidence="4">Belongs to the Cu-Zn superoxide dismutase family.</text>
</comment>
<protein>
    <recommendedName>
        <fullName evidence="2">Superoxide dismutase [Cu-Zn]</fullName>
        <ecNumber>1.15.1.1</ecNumber>
    </recommendedName>
    <alternativeName>
        <fullName evidence="2">Superoxide dismutase 1</fullName>
    </alternativeName>
</protein>
<gene>
    <name evidence="2" type="primary">Sod1</name>
    <name evidence="2" type="synonym">Sod</name>
</gene>
<name>SODC_DROMI</name>
<accession>Q95079</accession>
<accession>Q56RE1</accession>